<comment type="function">
    <text evidence="1">Binds directly to 23S rRNA. The L1 stalk is quite mobile in the ribosome, and is involved in E site tRNA release.</text>
</comment>
<comment type="function">
    <text evidence="1">Protein L1 is also a translational repressor protein, it controls the translation of the L11 operon by binding to its mRNA.</text>
</comment>
<comment type="subunit">
    <text evidence="1">Part of the 50S ribosomal subunit.</text>
</comment>
<comment type="similarity">
    <text evidence="1">Belongs to the universal ribosomal protein uL1 family.</text>
</comment>
<feature type="chain" id="PRO_0000230588" description="Large ribosomal subunit protein uL1">
    <location>
        <begin position="1"/>
        <end position="238"/>
    </location>
</feature>
<name>RL1_TRIV2</name>
<evidence type="ECO:0000255" key="1">
    <source>
        <dbReference type="HAMAP-Rule" id="MF_01318"/>
    </source>
</evidence>
<evidence type="ECO:0000305" key="2"/>
<sequence length="238" mass="26081">MTKKVSRRLRELQAKVEDREYGPLDALSLLKETATAKFAEAAEAHIRLGIDPKYTDQQLRTTVALPKGTGQIVRVAVIARGEKVTEASNAGADVFGSEELIDEIQKGRMDFDKLIATPDVMPQVAKLGKMLGPRGLMPSPKGGTVTFDIASAIAEFKAGKLEFRADRTGIVHVMFGKASFSPEDLLVNLKALQETIDRNRPSGAKGRYWRTFYVSATMGPSIRVDINALRDYKLTEAA</sequence>
<protein>
    <recommendedName>
        <fullName evidence="1">Large ribosomal subunit protein uL1</fullName>
    </recommendedName>
    <alternativeName>
        <fullName evidence="2">50S ribosomal protein L1</fullName>
    </alternativeName>
</protein>
<reference key="1">
    <citation type="journal article" date="2014" name="Stand. Genomic Sci.">
        <title>Complete genome sequence of Anabaena variabilis ATCC 29413.</title>
        <authorList>
            <person name="Thiel T."/>
            <person name="Pratte B.S."/>
            <person name="Zhong J."/>
            <person name="Goodwin L."/>
            <person name="Copeland A."/>
            <person name="Lucas S."/>
            <person name="Han C."/>
            <person name="Pitluck S."/>
            <person name="Land M.L."/>
            <person name="Kyrpides N.C."/>
            <person name="Woyke T."/>
        </authorList>
    </citation>
    <scope>NUCLEOTIDE SEQUENCE [LARGE SCALE GENOMIC DNA]</scope>
    <source>
        <strain>ATCC 29413 / PCC 7937</strain>
    </source>
</reference>
<gene>
    <name evidence="1" type="primary">rplA</name>
    <name evidence="1" type="synonym">rpl1</name>
    <name type="ordered locus">Ava_2553</name>
</gene>
<accession>Q3MA18</accession>
<dbReference type="EMBL" id="CP000117">
    <property type="protein sequence ID" value="ABA22168.1"/>
    <property type="molecule type" value="Genomic_DNA"/>
</dbReference>
<dbReference type="SMR" id="Q3MA18"/>
<dbReference type="STRING" id="240292.Ava_2553"/>
<dbReference type="KEGG" id="ava:Ava_2553"/>
<dbReference type="eggNOG" id="COG0081">
    <property type="taxonomic scope" value="Bacteria"/>
</dbReference>
<dbReference type="HOGENOM" id="CLU_062853_0_0_3"/>
<dbReference type="Proteomes" id="UP000002533">
    <property type="component" value="Chromosome"/>
</dbReference>
<dbReference type="GO" id="GO:0015934">
    <property type="term" value="C:large ribosomal subunit"/>
    <property type="evidence" value="ECO:0007669"/>
    <property type="project" value="InterPro"/>
</dbReference>
<dbReference type="GO" id="GO:0019843">
    <property type="term" value="F:rRNA binding"/>
    <property type="evidence" value="ECO:0007669"/>
    <property type="project" value="UniProtKB-UniRule"/>
</dbReference>
<dbReference type="GO" id="GO:0003735">
    <property type="term" value="F:structural constituent of ribosome"/>
    <property type="evidence" value="ECO:0007669"/>
    <property type="project" value="InterPro"/>
</dbReference>
<dbReference type="GO" id="GO:0000049">
    <property type="term" value="F:tRNA binding"/>
    <property type="evidence" value="ECO:0007669"/>
    <property type="project" value="UniProtKB-KW"/>
</dbReference>
<dbReference type="GO" id="GO:0006417">
    <property type="term" value="P:regulation of translation"/>
    <property type="evidence" value="ECO:0007669"/>
    <property type="project" value="UniProtKB-KW"/>
</dbReference>
<dbReference type="GO" id="GO:0006412">
    <property type="term" value="P:translation"/>
    <property type="evidence" value="ECO:0007669"/>
    <property type="project" value="UniProtKB-UniRule"/>
</dbReference>
<dbReference type="CDD" id="cd00403">
    <property type="entry name" value="Ribosomal_L1"/>
    <property type="match status" value="1"/>
</dbReference>
<dbReference type="FunFam" id="3.40.50.790:FF:000001">
    <property type="entry name" value="50S ribosomal protein L1"/>
    <property type="match status" value="1"/>
</dbReference>
<dbReference type="Gene3D" id="3.30.190.20">
    <property type="match status" value="1"/>
</dbReference>
<dbReference type="Gene3D" id="3.40.50.790">
    <property type="match status" value="1"/>
</dbReference>
<dbReference type="HAMAP" id="MF_01318_B">
    <property type="entry name" value="Ribosomal_uL1_B"/>
    <property type="match status" value="1"/>
</dbReference>
<dbReference type="InterPro" id="IPR005878">
    <property type="entry name" value="Ribosom_uL1_bac-type"/>
</dbReference>
<dbReference type="InterPro" id="IPR002143">
    <property type="entry name" value="Ribosomal_uL1"/>
</dbReference>
<dbReference type="InterPro" id="IPR023674">
    <property type="entry name" value="Ribosomal_uL1-like"/>
</dbReference>
<dbReference type="InterPro" id="IPR028364">
    <property type="entry name" value="Ribosomal_uL1/biogenesis"/>
</dbReference>
<dbReference type="InterPro" id="IPR016095">
    <property type="entry name" value="Ribosomal_uL1_3-a/b-sand"/>
</dbReference>
<dbReference type="InterPro" id="IPR023673">
    <property type="entry name" value="Ribosomal_uL1_CS"/>
</dbReference>
<dbReference type="NCBIfam" id="TIGR01169">
    <property type="entry name" value="rplA_bact"/>
    <property type="match status" value="1"/>
</dbReference>
<dbReference type="PANTHER" id="PTHR36427">
    <property type="entry name" value="54S RIBOSOMAL PROTEIN L1, MITOCHONDRIAL"/>
    <property type="match status" value="1"/>
</dbReference>
<dbReference type="PANTHER" id="PTHR36427:SF3">
    <property type="entry name" value="LARGE RIBOSOMAL SUBUNIT PROTEIN UL1M"/>
    <property type="match status" value="1"/>
</dbReference>
<dbReference type="Pfam" id="PF00687">
    <property type="entry name" value="Ribosomal_L1"/>
    <property type="match status" value="1"/>
</dbReference>
<dbReference type="PIRSF" id="PIRSF002155">
    <property type="entry name" value="Ribosomal_L1"/>
    <property type="match status" value="1"/>
</dbReference>
<dbReference type="SUPFAM" id="SSF56808">
    <property type="entry name" value="Ribosomal protein L1"/>
    <property type="match status" value="1"/>
</dbReference>
<dbReference type="PROSITE" id="PS01199">
    <property type="entry name" value="RIBOSOMAL_L1"/>
    <property type="match status" value="1"/>
</dbReference>
<organism>
    <name type="scientific">Trichormus variabilis (strain ATCC 29413 / PCC 7937)</name>
    <name type="common">Anabaena variabilis</name>
    <dbReference type="NCBI Taxonomy" id="240292"/>
    <lineage>
        <taxon>Bacteria</taxon>
        <taxon>Bacillati</taxon>
        <taxon>Cyanobacteriota</taxon>
        <taxon>Cyanophyceae</taxon>
        <taxon>Nostocales</taxon>
        <taxon>Nostocaceae</taxon>
        <taxon>Trichormus</taxon>
    </lineage>
</organism>
<keyword id="KW-0678">Repressor</keyword>
<keyword id="KW-0687">Ribonucleoprotein</keyword>
<keyword id="KW-0689">Ribosomal protein</keyword>
<keyword id="KW-0694">RNA-binding</keyword>
<keyword id="KW-0699">rRNA-binding</keyword>
<keyword id="KW-0810">Translation regulation</keyword>
<keyword id="KW-0820">tRNA-binding</keyword>
<proteinExistence type="inferred from homology"/>